<proteinExistence type="evidence at protein level"/>
<name>SPAC_BPT4</name>
<organismHost>
    <name type="scientific">Escherichia coli</name>
    <dbReference type="NCBI Taxonomy" id="562"/>
</organismHost>
<organism>
    <name type="scientific">Enterobacteria phage T4</name>
    <name type="common">Bacteriophage T4</name>
    <dbReference type="NCBI Taxonomy" id="10665"/>
    <lineage>
        <taxon>Viruses</taxon>
        <taxon>Duplodnaviria</taxon>
        <taxon>Heunggongvirae</taxon>
        <taxon>Uroviricota</taxon>
        <taxon>Caudoviricetes</taxon>
        <taxon>Straboviridae</taxon>
        <taxon>Tevenvirinae</taxon>
        <taxon>Tequatrovirus</taxon>
    </lineage>
</organism>
<reference key="1">
    <citation type="journal article" date="1993" name="J. Virol.">
        <title>Analysis of five presumptive protein-coding sequences clustered between the primosome genes, 41 and 61, of bacteriophages T4, T2, and T6.</title>
        <authorList>
            <person name="Selick H.E."/>
            <person name="Stormo G.D."/>
            <person name="Dyson R.L."/>
            <person name="Alberts B.M."/>
        </authorList>
    </citation>
    <scope>NUCLEOTIDE SEQUENCE [GENOMIC DNA]</scope>
</reference>
<reference key="2">
    <citation type="journal article" date="2003" name="Microbiol. Mol. Biol. Rev.">
        <title>Bacteriophage T4 genome.</title>
        <authorList>
            <person name="Miller E.S."/>
            <person name="Kutter E."/>
            <person name="Mosig G."/>
            <person name="Arisaka F."/>
            <person name="Kunisawa T."/>
            <person name="Ruger W."/>
        </authorList>
    </citation>
    <scope>NUCLEOTIDE SEQUENCE [LARGE SCALE GENOMIC DNA]</scope>
</reference>
<reference key="3">
    <citation type="journal article" date="1999" name="Virology">
        <title>Gene 61.3 of bacteriophage T4 is the spackle gene.</title>
        <authorList>
            <person name="Kai T."/>
            <person name="Ueno H."/>
            <person name="Otsuka Y."/>
            <person name="Morimoto W."/>
            <person name="Yonesaki T."/>
        </authorList>
    </citation>
    <scope>IDENTIFICATION</scope>
</reference>
<reference key="4">
    <citation type="journal article" date="1974" name="J. Virol.">
        <title>Spackle and immunity functions of bacteriophage T4.</title>
        <authorList>
            <person name="Cornett J.B."/>
        </authorList>
    </citation>
    <scope>FUNCTION</scope>
</reference>
<reference evidence="6" key="5">
    <citation type="journal article" date="2020" name="Acta Crystallogr. D">
        <title>Crystal structure of bacteriophage T4 Spackle as determined by native SAD phasing.</title>
        <authorList>
            <person name="Shi K."/>
            <person name="Kurniawan F."/>
            <person name="Banerjee S."/>
            <person name="Moeller N.H."/>
            <person name="Aihara H."/>
        </authorList>
    </citation>
    <scope>X-RAY CRYSTALLOGRAPHY (1.52 ANGSTROMS)</scope>
    <scope>SUBUNIT</scope>
    <scope>DISULFIDE BOND</scope>
</reference>
<reference evidence="7 8" key="6">
    <citation type="journal article" date="2020" name="Commun. Biol.">
        <title>Structural basis of superinfection exclusion by bacteriophage T4 Spackle.</title>
        <authorList>
            <person name="Shi K."/>
            <person name="Oakland J.T."/>
            <person name="Kurniawan F."/>
            <person name="Moeller N.H."/>
            <person name="Banerjee S."/>
            <person name="Aihara H."/>
        </authorList>
    </citation>
    <scope>X-RAY CRYSTALLOGRAPHY (1.78 ANGSTROMS)</scope>
    <scope>INTERACTION WITH THE BASEPLATE CENTRAL SPIKE PROTEIN GP5</scope>
    <scope>FUNCTION</scope>
</reference>
<reference evidence="9 10" key="7">
    <citation type="journal article" date="2020" name="Viruses">
        <title>Structure and Function of the T4 Spackle Protein Gp61.3.</title>
        <authorList>
            <person name="Kanamaru S."/>
            <person name="Uchida K."/>
            <person name="Nemoto M."/>
            <person name="Fraser A."/>
            <person name="Arisaka F."/>
            <person name="Leiman P.G."/>
        </authorList>
    </citation>
    <scope>X-RAY CRYSTALLOGRAPHY (1.15 ANGSTROMS) OF 23-97</scope>
    <scope>SUBCELLULAR LOCATION</scope>
    <scope>INTERACTION WITH THE BASEPLATE CENTRAL SPIKE PROTEIN GP5</scope>
    <scope>FUNCTION</scope>
</reference>
<gene>
    <name evidence="1" type="primary">sp</name>
    <name type="synonym">61.3</name>
</gene>
<sequence>MKKFIFATIFALASCAAQPAMAGYDKDLCEWSMTADQTEVETQIEADIMNIVKRDRPEMKAEVQKQLKSGGVMQYNYVLYCDKNFNNKNIIAEVVGE</sequence>
<protein>
    <recommendedName>
        <fullName evidence="1">Protein spackle</fullName>
    </recommendedName>
</protein>
<keyword id="KW-0002">3D-structure</keyword>
<keyword id="KW-1015">Disulfide bond</keyword>
<keyword id="KW-1049">Host periplasm</keyword>
<keyword id="KW-0945">Host-virus interaction</keyword>
<keyword id="KW-1185">Reference proteome</keyword>
<keyword id="KW-0732">Signal</keyword>
<keyword id="KW-1260">Superinfection exclusion</keyword>
<dbReference type="EMBL" id="S57514">
    <property type="protein sequence ID" value="AAB25710.1"/>
    <property type="molecule type" value="Genomic_DNA"/>
</dbReference>
<dbReference type="EMBL" id="AF158101">
    <property type="protein sequence ID" value="AAD42510.1"/>
    <property type="molecule type" value="Genomic_DNA"/>
</dbReference>
<dbReference type="PIR" id="C45681">
    <property type="entry name" value="C45681"/>
</dbReference>
<dbReference type="RefSeq" id="NP_049651.1">
    <property type="nucleotide sequence ID" value="NC_000866.4"/>
</dbReference>
<dbReference type="PDB" id="6X6O">
    <property type="method" value="X-ray"/>
    <property type="resolution" value="1.52 A"/>
    <property type="chains" value="A/B=1-97"/>
</dbReference>
<dbReference type="PDB" id="6XC0">
    <property type="method" value="X-ray"/>
    <property type="resolution" value="1.78 A"/>
    <property type="chains" value="C/D=1-97"/>
</dbReference>
<dbReference type="PDB" id="6XC1">
    <property type="method" value="X-ray"/>
    <property type="resolution" value="1.92 A"/>
    <property type="chains" value="C=1-97"/>
</dbReference>
<dbReference type="PDB" id="7CN6">
    <property type="method" value="X-ray"/>
    <property type="resolution" value="1.60 A"/>
    <property type="chains" value="A/B/C=23-97"/>
</dbReference>
<dbReference type="PDB" id="7CN7">
    <property type="method" value="X-ray"/>
    <property type="resolution" value="1.15 A"/>
    <property type="chains" value="C=23-97"/>
</dbReference>
<dbReference type="PDBsum" id="6X6O"/>
<dbReference type="PDBsum" id="6XC0"/>
<dbReference type="PDBsum" id="6XC1"/>
<dbReference type="PDBsum" id="7CN6"/>
<dbReference type="PDBsum" id="7CN7"/>
<dbReference type="SMR" id="P39230"/>
<dbReference type="GeneID" id="1258657"/>
<dbReference type="KEGG" id="vg:1258657"/>
<dbReference type="OrthoDB" id="17233at10239"/>
<dbReference type="Proteomes" id="UP000009087">
    <property type="component" value="Segment"/>
</dbReference>
<dbReference type="GO" id="GO:0044229">
    <property type="term" value="C:host cell periplasmic space"/>
    <property type="evidence" value="ECO:0007669"/>
    <property type="project" value="UniProtKB-SubCell"/>
</dbReference>
<dbReference type="GO" id="GO:0098669">
    <property type="term" value="P:superinfection exclusion"/>
    <property type="evidence" value="ECO:0000314"/>
    <property type="project" value="UniProtKB"/>
</dbReference>
<dbReference type="HAMAP" id="MF_04159">
    <property type="entry name" value="SPACKLE_T4"/>
    <property type="match status" value="1"/>
</dbReference>
<dbReference type="InterPro" id="IPR046391">
    <property type="entry name" value="SPACKLE_T4"/>
</dbReference>
<feature type="signal peptide" evidence="1">
    <location>
        <begin position="1"/>
        <end position="22"/>
    </location>
</feature>
<feature type="chain" id="PRO_0000003330" description="Protein spackle" evidence="1">
    <location>
        <begin position="23"/>
        <end position="97"/>
    </location>
</feature>
<feature type="disulfide bond" evidence="1 2">
    <location>
        <begin position="29"/>
        <end position="81"/>
    </location>
</feature>
<feature type="helix" evidence="11">
    <location>
        <begin position="26"/>
        <end position="34"/>
    </location>
</feature>
<feature type="helix" evidence="11">
    <location>
        <begin position="37"/>
        <end position="55"/>
    </location>
</feature>
<feature type="helix" evidence="11">
    <location>
        <begin position="57"/>
        <end position="59"/>
    </location>
</feature>
<feature type="helix" evidence="11">
    <location>
        <begin position="60"/>
        <end position="70"/>
    </location>
</feature>
<feature type="helix" evidence="11">
    <location>
        <begin position="73"/>
        <end position="75"/>
    </location>
</feature>
<feature type="helix" evidence="11">
    <location>
        <begin position="76"/>
        <end position="80"/>
    </location>
</feature>
<feature type="helix" evidence="11">
    <location>
        <begin position="87"/>
        <end position="89"/>
    </location>
</feature>
<feature type="helix" evidence="11">
    <location>
        <begin position="90"/>
        <end position="95"/>
    </location>
</feature>
<comment type="function">
    <text evidence="1 3 4 5">Inhibits viral DNA ejection into the host cytoplasm, thereby conferring the infected host bacteria with immunity against secondary phage infection (PubMed:4589853). Achieves superinfection exclusion by localizing to the periplasm and inhibiting the activity of tail-associated lysozyme, thereby preventing penetration by the tail tube of incoming phages (PubMed:32987925, PubMed:33214665).</text>
</comment>
<comment type="subunit">
    <text evidence="1 2 3 4">Monomer (PubMed:32876065). Interacts with the baseplate central spike protein Gp5; this interaction selectively inhibits the lysozyme activity of the baseplate central spike protein (PubMed:32987925, PubMed:33214665).</text>
</comment>
<comment type="subcellular location">
    <subcellularLocation>
        <location evidence="1 3">Host periplasm</location>
    </subcellularLocation>
</comment>
<comment type="similarity">
    <text evidence="1">Belongs to the Tevenvirinae spackle protein family.</text>
</comment>
<evidence type="ECO:0000255" key="1">
    <source>
        <dbReference type="HAMAP-Rule" id="MF_04159"/>
    </source>
</evidence>
<evidence type="ECO:0000269" key="2">
    <source>
    </source>
</evidence>
<evidence type="ECO:0000269" key="3">
    <source>
    </source>
</evidence>
<evidence type="ECO:0000269" key="4">
    <source>
    </source>
</evidence>
<evidence type="ECO:0000269" key="5">
    <source>
    </source>
</evidence>
<evidence type="ECO:0007744" key="6">
    <source>
        <dbReference type="PDB" id="6X6O"/>
    </source>
</evidence>
<evidence type="ECO:0007744" key="7">
    <source>
        <dbReference type="PDB" id="6XC0"/>
    </source>
</evidence>
<evidence type="ECO:0007744" key="8">
    <source>
        <dbReference type="PDB" id="6XC1"/>
    </source>
</evidence>
<evidence type="ECO:0007744" key="9">
    <source>
        <dbReference type="PDB" id="7CN6"/>
    </source>
</evidence>
<evidence type="ECO:0007744" key="10">
    <source>
        <dbReference type="PDB" id="7CN7"/>
    </source>
</evidence>
<evidence type="ECO:0007829" key="11">
    <source>
        <dbReference type="PDB" id="7CN7"/>
    </source>
</evidence>
<accession>P39230</accession>